<evidence type="ECO:0000250" key="1"/>
<evidence type="ECO:0000250" key="2">
    <source>
        <dbReference type="UniProtKB" id="O08774"/>
    </source>
</evidence>
<evidence type="ECO:0000250" key="3">
    <source>
        <dbReference type="UniProtKB" id="Q8CGE9"/>
    </source>
</evidence>
<evidence type="ECO:0000255" key="4">
    <source>
        <dbReference type="PROSITE-ProRule" id="PRU00097"/>
    </source>
</evidence>
<evidence type="ECO:0000255" key="5">
    <source>
        <dbReference type="PROSITE-ProRule" id="PRU00143"/>
    </source>
</evidence>
<evidence type="ECO:0000255" key="6">
    <source>
        <dbReference type="PROSITE-ProRule" id="PRU00148"/>
    </source>
</evidence>
<evidence type="ECO:0000255" key="7">
    <source>
        <dbReference type="PROSITE-ProRule" id="PRU00171"/>
    </source>
</evidence>
<evidence type="ECO:0000255" key="8">
    <source>
        <dbReference type="PROSITE-ProRule" id="PRU00262"/>
    </source>
</evidence>
<evidence type="ECO:0000256" key="9">
    <source>
        <dbReference type="SAM" id="MobiDB-lite"/>
    </source>
</evidence>
<evidence type="ECO:0000269" key="10">
    <source>
    </source>
</evidence>
<evidence type="ECO:0000269" key="11">
    <source>
    </source>
</evidence>
<evidence type="ECO:0000269" key="12">
    <source>
    </source>
</evidence>
<evidence type="ECO:0000303" key="13">
    <source>
    </source>
</evidence>
<evidence type="ECO:0000303" key="14">
    <source>
    </source>
</evidence>
<evidence type="ECO:0000303" key="15">
    <source>
    </source>
</evidence>
<evidence type="ECO:0000303" key="16">
    <source>
    </source>
</evidence>
<evidence type="ECO:0000303" key="17">
    <source ref="3"/>
</evidence>
<evidence type="ECO:0000305" key="18"/>
<evidence type="ECO:0007744" key="19">
    <source>
    </source>
</evidence>
<evidence type="ECO:0007744" key="20">
    <source>
    </source>
</evidence>
<evidence type="ECO:0007829" key="21">
    <source>
        <dbReference type="PDB" id="2EBZ"/>
    </source>
</evidence>
<evidence type="ECO:0007829" key="22">
    <source>
        <dbReference type="PDB" id="2KV8"/>
    </source>
</evidence>
<accession>O14924</accession>
<accession>B1AQ30</accession>
<accession>B1AQ31</accession>
<accession>B1AQ32</accession>
<accession>B7Z764</accession>
<accession>E7EMN9</accession>
<accession>O14922</accession>
<accession>O14923</accession>
<accession>O43510</accession>
<accession>O75338</accession>
<accession>Q147X0</accession>
<accession>Q8WX95</accession>
<dbReference type="EMBL" id="AF030112">
    <property type="protein sequence ID" value="AAB84187.1"/>
    <property type="molecule type" value="mRNA"/>
</dbReference>
<dbReference type="EMBL" id="AF030111">
    <property type="protein sequence ID" value="AAB84114.1"/>
    <property type="molecule type" value="mRNA"/>
</dbReference>
<dbReference type="EMBL" id="AF030110">
    <property type="protein sequence ID" value="AAB84007.1"/>
    <property type="molecule type" value="mRNA"/>
</dbReference>
<dbReference type="EMBL" id="AF030109">
    <property type="protein sequence ID" value="AAB84186.1"/>
    <property type="molecule type" value="mRNA"/>
</dbReference>
<dbReference type="EMBL" id="AF030149">
    <property type="protein sequence ID" value="AAB96645.1"/>
    <property type="molecule type" value="Genomic_DNA"/>
</dbReference>
<dbReference type="EMBL" id="AF030151">
    <property type="protein sequence ID" value="AAB96645.1"/>
    <property type="status" value="JOINED"/>
    <property type="molecule type" value="Genomic_DNA"/>
</dbReference>
<dbReference type="EMBL" id="AF030152">
    <property type="protein sequence ID" value="AAB96645.1"/>
    <property type="status" value="JOINED"/>
    <property type="molecule type" value="Genomic_DNA"/>
</dbReference>
<dbReference type="EMBL" id="AF030135">
    <property type="protein sequence ID" value="AAB96645.1"/>
    <property type="status" value="JOINED"/>
    <property type="molecule type" value="Genomic_DNA"/>
</dbReference>
<dbReference type="EMBL" id="AF030136">
    <property type="protein sequence ID" value="AAB96645.1"/>
    <property type="status" value="JOINED"/>
    <property type="molecule type" value="Genomic_DNA"/>
</dbReference>
<dbReference type="EMBL" id="AF030137">
    <property type="protein sequence ID" value="AAB96645.1"/>
    <property type="status" value="JOINED"/>
    <property type="molecule type" value="Genomic_DNA"/>
</dbReference>
<dbReference type="EMBL" id="AF030138">
    <property type="protein sequence ID" value="AAB96645.1"/>
    <property type="status" value="JOINED"/>
    <property type="molecule type" value="Genomic_DNA"/>
</dbReference>
<dbReference type="EMBL" id="AF030139">
    <property type="protein sequence ID" value="AAB96645.1"/>
    <property type="status" value="JOINED"/>
    <property type="molecule type" value="Genomic_DNA"/>
</dbReference>
<dbReference type="EMBL" id="AF030140">
    <property type="protein sequence ID" value="AAB96645.1"/>
    <property type="status" value="JOINED"/>
    <property type="molecule type" value="Genomic_DNA"/>
</dbReference>
<dbReference type="EMBL" id="AF030141">
    <property type="protein sequence ID" value="AAB96645.1"/>
    <property type="status" value="JOINED"/>
    <property type="molecule type" value="Genomic_DNA"/>
</dbReference>
<dbReference type="EMBL" id="AF030142">
    <property type="protein sequence ID" value="AAB96645.1"/>
    <property type="status" value="JOINED"/>
    <property type="molecule type" value="Genomic_DNA"/>
</dbReference>
<dbReference type="EMBL" id="AF030143">
    <property type="protein sequence ID" value="AAB96645.1"/>
    <property type="status" value="JOINED"/>
    <property type="molecule type" value="Genomic_DNA"/>
</dbReference>
<dbReference type="EMBL" id="AF030144">
    <property type="protein sequence ID" value="AAB96645.1"/>
    <property type="status" value="JOINED"/>
    <property type="molecule type" value="Genomic_DNA"/>
</dbReference>
<dbReference type="EMBL" id="AF030145">
    <property type="protein sequence ID" value="AAB96645.1"/>
    <property type="status" value="JOINED"/>
    <property type="molecule type" value="Genomic_DNA"/>
</dbReference>
<dbReference type="EMBL" id="AF030146">
    <property type="protein sequence ID" value="AAB96645.1"/>
    <property type="status" value="JOINED"/>
    <property type="molecule type" value="Genomic_DNA"/>
</dbReference>
<dbReference type="EMBL" id="AF030147">
    <property type="protein sequence ID" value="AAB96645.1"/>
    <property type="status" value="JOINED"/>
    <property type="molecule type" value="Genomic_DNA"/>
</dbReference>
<dbReference type="EMBL" id="AF030148">
    <property type="protein sequence ID" value="AAB96645.1"/>
    <property type="status" value="JOINED"/>
    <property type="molecule type" value="Genomic_DNA"/>
</dbReference>
<dbReference type="EMBL" id="AF030149">
    <property type="protein sequence ID" value="AAB96646.1"/>
    <property type="status" value="ALT_SEQ"/>
    <property type="molecule type" value="Genomic_DNA"/>
</dbReference>
<dbReference type="EMBL" id="AF030135">
    <property type="protein sequence ID" value="AAB96646.1"/>
    <property type="status" value="JOINED"/>
    <property type="molecule type" value="Genomic_DNA"/>
</dbReference>
<dbReference type="EMBL" id="AF030136">
    <property type="protein sequence ID" value="AAB96646.1"/>
    <property type="status" value="JOINED"/>
    <property type="molecule type" value="Genomic_DNA"/>
</dbReference>
<dbReference type="EMBL" id="AF030137">
    <property type="protein sequence ID" value="AAB96646.1"/>
    <property type="status" value="JOINED"/>
    <property type="molecule type" value="Genomic_DNA"/>
</dbReference>
<dbReference type="EMBL" id="AF030138">
    <property type="protein sequence ID" value="AAB96646.1"/>
    <property type="status" value="JOINED"/>
    <property type="molecule type" value="Genomic_DNA"/>
</dbReference>
<dbReference type="EMBL" id="AF030139">
    <property type="protein sequence ID" value="AAB96646.1"/>
    <property type="status" value="JOINED"/>
    <property type="molecule type" value="Genomic_DNA"/>
</dbReference>
<dbReference type="EMBL" id="AF030140">
    <property type="protein sequence ID" value="AAB96646.1"/>
    <property type="status" value="JOINED"/>
    <property type="molecule type" value="Genomic_DNA"/>
</dbReference>
<dbReference type="EMBL" id="AF030141">
    <property type="protein sequence ID" value="AAB96646.1"/>
    <property type="status" value="JOINED"/>
    <property type="molecule type" value="Genomic_DNA"/>
</dbReference>
<dbReference type="EMBL" id="AF030142">
    <property type="protein sequence ID" value="AAB96646.1"/>
    <property type="status" value="JOINED"/>
    <property type="molecule type" value="Genomic_DNA"/>
</dbReference>
<dbReference type="EMBL" id="AF030143">
    <property type="protein sequence ID" value="AAB96646.1"/>
    <property type="status" value="JOINED"/>
    <property type="molecule type" value="Genomic_DNA"/>
</dbReference>
<dbReference type="EMBL" id="AF030144">
    <property type="protein sequence ID" value="AAB96646.1"/>
    <property type="status" value="JOINED"/>
    <property type="molecule type" value="Genomic_DNA"/>
</dbReference>
<dbReference type="EMBL" id="AF030145">
    <property type="protein sequence ID" value="AAB96646.1"/>
    <property type="status" value="JOINED"/>
    <property type="molecule type" value="Genomic_DNA"/>
</dbReference>
<dbReference type="EMBL" id="AF030146">
    <property type="protein sequence ID" value="AAB96646.1"/>
    <property type="status" value="JOINED"/>
    <property type="molecule type" value="Genomic_DNA"/>
</dbReference>
<dbReference type="EMBL" id="AF030147">
    <property type="protein sequence ID" value="AAB96646.1"/>
    <property type="status" value="JOINED"/>
    <property type="molecule type" value="Genomic_DNA"/>
</dbReference>
<dbReference type="EMBL" id="AF030148">
    <property type="protein sequence ID" value="AAB96646.1"/>
    <property type="status" value="JOINED"/>
    <property type="molecule type" value="Genomic_DNA"/>
</dbReference>
<dbReference type="EMBL" id="AF030149">
    <property type="protein sequence ID" value="AAB96644.1"/>
    <property type="molecule type" value="Genomic_DNA"/>
</dbReference>
<dbReference type="EMBL" id="AF030134">
    <property type="protein sequence ID" value="AAB96644.1"/>
    <property type="status" value="JOINED"/>
    <property type="molecule type" value="Genomic_DNA"/>
</dbReference>
<dbReference type="EMBL" id="AF030135">
    <property type="protein sequence ID" value="AAB96644.1"/>
    <property type="status" value="JOINED"/>
    <property type="molecule type" value="Genomic_DNA"/>
</dbReference>
<dbReference type="EMBL" id="AF030136">
    <property type="protein sequence ID" value="AAB96644.1"/>
    <property type="status" value="JOINED"/>
    <property type="molecule type" value="Genomic_DNA"/>
</dbReference>
<dbReference type="EMBL" id="AF030137">
    <property type="protein sequence ID" value="AAB96644.1"/>
    <property type="status" value="JOINED"/>
    <property type="molecule type" value="Genomic_DNA"/>
</dbReference>
<dbReference type="EMBL" id="AF030138">
    <property type="protein sequence ID" value="AAB96644.1"/>
    <property type="status" value="JOINED"/>
    <property type="molecule type" value="Genomic_DNA"/>
</dbReference>
<dbReference type="EMBL" id="AF030139">
    <property type="protein sequence ID" value="AAB96644.1"/>
    <property type="status" value="JOINED"/>
    <property type="molecule type" value="Genomic_DNA"/>
</dbReference>
<dbReference type="EMBL" id="AF030140">
    <property type="protein sequence ID" value="AAB96644.1"/>
    <property type="status" value="JOINED"/>
    <property type="molecule type" value="Genomic_DNA"/>
</dbReference>
<dbReference type="EMBL" id="AF030141">
    <property type="protein sequence ID" value="AAB96644.1"/>
    <property type="status" value="JOINED"/>
    <property type="molecule type" value="Genomic_DNA"/>
</dbReference>
<dbReference type="EMBL" id="AF030142">
    <property type="protein sequence ID" value="AAB96644.1"/>
    <property type="status" value="JOINED"/>
    <property type="molecule type" value="Genomic_DNA"/>
</dbReference>
<dbReference type="EMBL" id="AF030143">
    <property type="protein sequence ID" value="AAB96644.1"/>
    <property type="status" value="JOINED"/>
    <property type="molecule type" value="Genomic_DNA"/>
</dbReference>
<dbReference type="EMBL" id="AF030144">
    <property type="protein sequence ID" value="AAB96644.1"/>
    <property type="status" value="JOINED"/>
    <property type="molecule type" value="Genomic_DNA"/>
</dbReference>
<dbReference type="EMBL" id="AF030145">
    <property type="protein sequence ID" value="AAB96644.1"/>
    <property type="status" value="JOINED"/>
    <property type="molecule type" value="Genomic_DNA"/>
</dbReference>
<dbReference type="EMBL" id="AF030146">
    <property type="protein sequence ID" value="AAB96644.1"/>
    <property type="status" value="JOINED"/>
    <property type="molecule type" value="Genomic_DNA"/>
</dbReference>
<dbReference type="EMBL" id="AF030147">
    <property type="protein sequence ID" value="AAB96644.1"/>
    <property type="status" value="JOINED"/>
    <property type="molecule type" value="Genomic_DNA"/>
</dbReference>
<dbReference type="EMBL" id="AF030148">
    <property type="protein sequence ID" value="AAB96644.1"/>
    <property type="status" value="JOINED"/>
    <property type="molecule type" value="Genomic_DNA"/>
</dbReference>
<dbReference type="EMBL" id="AF035152">
    <property type="protein sequence ID" value="AAC39835.1"/>
    <property type="molecule type" value="mRNA"/>
</dbReference>
<dbReference type="EMBL" id="AF464737">
    <property type="protein sequence ID" value="AAL69961.1"/>
    <property type="molecule type" value="mRNA"/>
</dbReference>
<dbReference type="EMBL" id="AK301510">
    <property type="protein sequence ID" value="BAH13500.1"/>
    <property type="molecule type" value="mRNA"/>
</dbReference>
<dbReference type="EMBL" id="AL590235">
    <property type="status" value="NOT_ANNOTATED_CDS"/>
    <property type="molecule type" value="Genomic_DNA"/>
</dbReference>
<dbReference type="EMBL" id="AL645949">
    <property type="status" value="NOT_ANNOTATED_CDS"/>
    <property type="molecule type" value="Genomic_DNA"/>
</dbReference>
<dbReference type="EMBL" id="CH471131">
    <property type="protein sequence ID" value="EAW82465.1"/>
    <property type="molecule type" value="Genomic_DNA"/>
</dbReference>
<dbReference type="EMBL" id="CH471131">
    <property type="protein sequence ID" value="EAW82468.1"/>
    <property type="molecule type" value="Genomic_DNA"/>
</dbReference>
<dbReference type="EMBL" id="BC118594">
    <property type="protein sequence ID" value="AAI18595.1"/>
    <property type="molecule type" value="mRNA"/>
</dbReference>
<dbReference type="EMBL" id="CH471131">
    <property type="protein sequence ID" value="EAW82469.1"/>
    <property type="molecule type" value="Genomic_DNA"/>
</dbReference>
<dbReference type="EMBL" id="CH471131">
    <property type="protein sequence ID" value="EAW82470.1"/>
    <property type="molecule type" value="Genomic_DNA"/>
</dbReference>
<dbReference type="CCDS" id="CCDS3366.1">
    <molecule id="O14924-1"/>
</dbReference>
<dbReference type="CCDS" id="CCDS3367.1">
    <molecule id="O14924-4"/>
</dbReference>
<dbReference type="CCDS" id="CCDS3368.1">
    <molecule id="O14924-3"/>
</dbReference>
<dbReference type="RefSeq" id="NP_001381083.1">
    <molecule id="O14924-1"/>
    <property type="nucleotide sequence ID" value="NM_001394154.1"/>
</dbReference>
<dbReference type="RefSeq" id="NP_001381084.1">
    <molecule id="O14924-1"/>
    <property type="nucleotide sequence ID" value="NM_001394155.1"/>
</dbReference>
<dbReference type="RefSeq" id="NP_001381085.1">
    <molecule id="O14924-4"/>
    <property type="nucleotide sequence ID" value="NM_001394156.1"/>
</dbReference>
<dbReference type="RefSeq" id="NP_001381087.1">
    <molecule id="O14924-5"/>
    <property type="nucleotide sequence ID" value="NM_001394158.1"/>
</dbReference>
<dbReference type="RefSeq" id="NP_002917.1">
    <molecule id="O14924-4"/>
    <property type="nucleotide sequence ID" value="NM_002926.5"/>
</dbReference>
<dbReference type="RefSeq" id="NP_937870.1">
    <molecule id="O14924-3"/>
    <property type="nucleotide sequence ID" value="NM_198227.2"/>
</dbReference>
<dbReference type="RefSeq" id="NP_937872.1">
    <molecule id="O14924-1"/>
    <property type="nucleotide sequence ID" value="NM_198229.3"/>
</dbReference>
<dbReference type="RefSeq" id="XP_006713968.1">
    <property type="nucleotide sequence ID" value="XM_006713905.1"/>
</dbReference>
<dbReference type="RefSeq" id="XP_006713969.1">
    <property type="nucleotide sequence ID" value="XM_006713906.2"/>
</dbReference>
<dbReference type="RefSeq" id="XP_006713970.1">
    <property type="nucleotide sequence ID" value="XM_006713907.1"/>
</dbReference>
<dbReference type="RefSeq" id="XP_011511845.1">
    <property type="nucleotide sequence ID" value="XM_011513543.2"/>
</dbReference>
<dbReference type="RefSeq" id="XP_016864018.1">
    <molecule id="O14924-1"/>
    <property type="nucleotide sequence ID" value="XM_017008529.3"/>
</dbReference>
<dbReference type="RefSeq" id="XP_016864020.1">
    <property type="nucleotide sequence ID" value="XM_017008531.1"/>
</dbReference>
<dbReference type="RefSeq" id="XP_016864021.1">
    <property type="nucleotide sequence ID" value="XM_017008532.1"/>
</dbReference>
<dbReference type="RefSeq" id="XP_016864022.1">
    <property type="nucleotide sequence ID" value="XM_017008533.1"/>
</dbReference>
<dbReference type="RefSeq" id="XP_047272011.1">
    <molecule id="O14924-5"/>
    <property type="nucleotide sequence ID" value="XM_047416055.1"/>
</dbReference>
<dbReference type="RefSeq" id="XP_054206657.1">
    <molecule id="O14924-1"/>
    <property type="nucleotide sequence ID" value="XM_054350682.1"/>
</dbReference>
<dbReference type="RefSeq" id="XP_054206658.1">
    <molecule id="O14924-5"/>
    <property type="nucleotide sequence ID" value="XM_054350683.1"/>
</dbReference>
<dbReference type="PDB" id="2EBZ">
    <property type="method" value="NMR"/>
    <property type="chains" value="A=705-852"/>
</dbReference>
<dbReference type="PDB" id="2KV8">
    <property type="method" value="NMR"/>
    <property type="chains" value="A=18-100"/>
</dbReference>
<dbReference type="PDBsum" id="2EBZ"/>
<dbReference type="PDBsum" id="2KV8"/>
<dbReference type="SMR" id="O14924"/>
<dbReference type="BioGRID" id="111934">
    <property type="interactions" value="52"/>
</dbReference>
<dbReference type="FunCoup" id="O14924">
    <property type="interactions" value="1538"/>
</dbReference>
<dbReference type="IntAct" id="O14924">
    <property type="interactions" value="19"/>
</dbReference>
<dbReference type="MINT" id="O14924"/>
<dbReference type="STRING" id="9606.ENSP00000339381"/>
<dbReference type="ChEMBL" id="CHEMBL1293276"/>
<dbReference type="GlyGen" id="O14924">
    <property type="glycosylation" value="1 site"/>
</dbReference>
<dbReference type="iPTMnet" id="O14924"/>
<dbReference type="PhosphoSitePlus" id="O14924"/>
<dbReference type="BioMuta" id="RGS12"/>
<dbReference type="jPOST" id="O14924"/>
<dbReference type="MassIVE" id="O14924"/>
<dbReference type="PaxDb" id="9606-ENSP00000339381"/>
<dbReference type="PeptideAtlas" id="O14924"/>
<dbReference type="ProteomicsDB" id="48302">
    <molecule id="O14924-1"/>
</dbReference>
<dbReference type="ProteomicsDB" id="48303">
    <molecule id="O14924-2"/>
</dbReference>
<dbReference type="ProteomicsDB" id="48304">
    <molecule id="O14924-3"/>
</dbReference>
<dbReference type="ProteomicsDB" id="48305">
    <molecule id="O14924-4"/>
</dbReference>
<dbReference type="ProteomicsDB" id="6836"/>
<dbReference type="ProteomicsDB" id="74991"/>
<dbReference type="Pumba" id="O14924"/>
<dbReference type="TopDownProteomics" id="O14924-2">
    <molecule id="O14924-2"/>
</dbReference>
<dbReference type="Antibodypedia" id="22482">
    <property type="antibodies" value="97 antibodies from 22 providers"/>
</dbReference>
<dbReference type="DNASU" id="6002"/>
<dbReference type="Ensembl" id="ENST00000336727.8">
    <molecule id="O14924-1"/>
    <property type="protein sequence ID" value="ENSP00000338509.4"/>
    <property type="gene ID" value="ENSG00000159788.20"/>
</dbReference>
<dbReference type="Ensembl" id="ENST00000338806.4">
    <molecule id="O14924-3"/>
    <property type="protein sequence ID" value="ENSP00000342133.4"/>
    <property type="gene ID" value="ENSG00000159788.20"/>
</dbReference>
<dbReference type="Ensembl" id="ENST00000344733.9">
    <molecule id="O14924-1"/>
    <property type="protein sequence ID" value="ENSP00000339381.5"/>
    <property type="gene ID" value="ENSG00000159788.20"/>
</dbReference>
<dbReference type="Ensembl" id="ENST00000382788.7">
    <molecule id="O14924-4"/>
    <property type="protein sequence ID" value="ENSP00000372238.3"/>
    <property type="gene ID" value="ENSG00000159788.20"/>
</dbReference>
<dbReference type="GeneID" id="6002"/>
<dbReference type="KEGG" id="hsa:6002"/>
<dbReference type="MANE-Select" id="ENST00000336727.8">
    <property type="protein sequence ID" value="ENSP00000338509.4"/>
    <property type="RefSeq nucleotide sequence ID" value="NM_001394154.1"/>
    <property type="RefSeq protein sequence ID" value="NP_001381083.1"/>
</dbReference>
<dbReference type="UCSC" id="uc003ggw.4">
    <molecule id="O14924-1"/>
    <property type="organism name" value="human"/>
</dbReference>
<dbReference type="AGR" id="HGNC:9994"/>
<dbReference type="CTD" id="6002"/>
<dbReference type="DisGeNET" id="6002"/>
<dbReference type="GeneCards" id="RGS12"/>
<dbReference type="HGNC" id="HGNC:9994">
    <property type="gene designation" value="RGS12"/>
</dbReference>
<dbReference type="HPA" id="ENSG00000159788">
    <property type="expression patterns" value="Low tissue specificity"/>
</dbReference>
<dbReference type="MIM" id="602512">
    <property type="type" value="gene"/>
</dbReference>
<dbReference type="neXtProt" id="NX_O14924"/>
<dbReference type="OpenTargets" id="ENSG00000159788"/>
<dbReference type="PharmGKB" id="PA34364"/>
<dbReference type="VEuPathDB" id="HostDB:ENSG00000159788"/>
<dbReference type="eggNOG" id="KOG3589">
    <property type="taxonomic scope" value="Eukaryota"/>
</dbReference>
<dbReference type="GeneTree" id="ENSGT00940000159741"/>
<dbReference type="HOGENOM" id="CLU_002190_0_0_1"/>
<dbReference type="InParanoid" id="O14924"/>
<dbReference type="OMA" id="HKSEWSK"/>
<dbReference type="OrthoDB" id="196547at2759"/>
<dbReference type="PAN-GO" id="O14924">
    <property type="GO annotations" value="5 GO annotations based on evolutionary models"/>
</dbReference>
<dbReference type="PhylomeDB" id="O14924"/>
<dbReference type="TreeFam" id="TF328814"/>
<dbReference type="PathwayCommons" id="O14924"/>
<dbReference type="Reactome" id="R-HSA-418594">
    <property type="pathway name" value="G alpha (i) signalling events"/>
</dbReference>
<dbReference type="SignaLink" id="O14924"/>
<dbReference type="BioGRID-ORCS" id="6002">
    <property type="hits" value="13 hits in 1163 CRISPR screens"/>
</dbReference>
<dbReference type="ChiTaRS" id="RGS12">
    <property type="organism name" value="human"/>
</dbReference>
<dbReference type="EvolutionaryTrace" id="O14924"/>
<dbReference type="GeneWiki" id="RGS12"/>
<dbReference type="GenomeRNAi" id="6002"/>
<dbReference type="Pharos" id="O14924">
    <property type="development level" value="Tbio"/>
</dbReference>
<dbReference type="PRO" id="PR:O14924"/>
<dbReference type="Proteomes" id="UP000005640">
    <property type="component" value="Chromosome 4"/>
</dbReference>
<dbReference type="RNAct" id="O14924">
    <property type="molecule type" value="protein"/>
</dbReference>
<dbReference type="Bgee" id="ENSG00000159788">
    <property type="expression patterns" value="Expressed in ganglionic eminence and 164 other cell types or tissues"/>
</dbReference>
<dbReference type="ExpressionAtlas" id="O14924">
    <property type="expression patterns" value="baseline and differential"/>
</dbReference>
<dbReference type="GO" id="GO:0000794">
    <property type="term" value="C:condensed nuclear chromosome"/>
    <property type="evidence" value="ECO:0000304"/>
    <property type="project" value="ProtInc"/>
</dbReference>
<dbReference type="GO" id="GO:0005737">
    <property type="term" value="C:cytoplasm"/>
    <property type="evidence" value="ECO:0000250"/>
    <property type="project" value="UniProtKB"/>
</dbReference>
<dbReference type="GO" id="GO:0005829">
    <property type="term" value="C:cytosol"/>
    <property type="evidence" value="ECO:0000314"/>
    <property type="project" value="HPA"/>
</dbReference>
<dbReference type="GO" id="GO:0030425">
    <property type="term" value="C:dendrite"/>
    <property type="evidence" value="ECO:0000250"/>
    <property type="project" value="UniProtKB"/>
</dbReference>
<dbReference type="GO" id="GO:0016363">
    <property type="term" value="C:nuclear matrix"/>
    <property type="evidence" value="ECO:0007669"/>
    <property type="project" value="UniProtKB-SubCell"/>
</dbReference>
<dbReference type="GO" id="GO:0005730">
    <property type="term" value="C:nucleolus"/>
    <property type="evidence" value="ECO:0000314"/>
    <property type="project" value="HPA"/>
</dbReference>
<dbReference type="GO" id="GO:0005654">
    <property type="term" value="C:nucleoplasm"/>
    <property type="evidence" value="ECO:0000314"/>
    <property type="project" value="HPA"/>
</dbReference>
<dbReference type="GO" id="GO:0005634">
    <property type="term" value="C:nucleus"/>
    <property type="evidence" value="ECO:0000250"/>
    <property type="project" value="UniProtKB"/>
</dbReference>
<dbReference type="GO" id="GO:0005886">
    <property type="term" value="C:plasma membrane"/>
    <property type="evidence" value="ECO:0000318"/>
    <property type="project" value="GO_Central"/>
</dbReference>
<dbReference type="GO" id="GO:0045202">
    <property type="term" value="C:synapse"/>
    <property type="evidence" value="ECO:0007669"/>
    <property type="project" value="UniProtKB-SubCell"/>
</dbReference>
<dbReference type="GO" id="GO:0005096">
    <property type="term" value="F:GTPase activator activity"/>
    <property type="evidence" value="ECO:0000318"/>
    <property type="project" value="GO_Central"/>
</dbReference>
<dbReference type="GO" id="GO:0003924">
    <property type="term" value="F:GTPase activity"/>
    <property type="evidence" value="ECO:0000304"/>
    <property type="project" value="Reactome"/>
</dbReference>
<dbReference type="GO" id="GO:0030695">
    <property type="term" value="F:GTPase regulator activity"/>
    <property type="evidence" value="ECO:0000314"/>
    <property type="project" value="UniProtKB"/>
</dbReference>
<dbReference type="GO" id="GO:0007186">
    <property type="term" value="P:G protein-coupled receptor signaling pathway"/>
    <property type="evidence" value="ECO:0000304"/>
    <property type="project" value="Reactome"/>
</dbReference>
<dbReference type="GO" id="GO:0009968">
    <property type="term" value="P:negative regulation of signal transduction"/>
    <property type="evidence" value="ECO:0007669"/>
    <property type="project" value="UniProtKB-KW"/>
</dbReference>
<dbReference type="GO" id="GO:0008277">
    <property type="term" value="P:regulation of G protein-coupled receptor signaling pathway"/>
    <property type="evidence" value="ECO:0000318"/>
    <property type="project" value="GO_Central"/>
</dbReference>
<dbReference type="CDD" id="cd06710">
    <property type="entry name" value="PDZ_RGS12-like"/>
    <property type="match status" value="1"/>
</dbReference>
<dbReference type="CDD" id="cd13162">
    <property type="entry name" value="PTB_RGS12"/>
    <property type="match status" value="1"/>
</dbReference>
<dbReference type="CDD" id="cd17136">
    <property type="entry name" value="RBD1_RGS12"/>
    <property type="match status" value="1"/>
</dbReference>
<dbReference type="CDD" id="cd08742">
    <property type="entry name" value="RGS_RGS12"/>
    <property type="match status" value="1"/>
</dbReference>
<dbReference type="FunFam" id="1.10.167.10:FF:000001">
    <property type="entry name" value="Putative regulator of g-protein signaling 12"/>
    <property type="match status" value="1"/>
</dbReference>
<dbReference type="FunFam" id="2.30.29.30:FF:000296">
    <property type="entry name" value="Regulator of G protein signaling 12"/>
    <property type="match status" value="1"/>
</dbReference>
<dbReference type="FunFam" id="2.30.42.10:FF:000115">
    <property type="entry name" value="Regulator of G-protein signaling 12"/>
    <property type="match status" value="1"/>
</dbReference>
<dbReference type="FunFam" id="3.10.20.90:FF:000168">
    <property type="entry name" value="Regulator of G-protein signaling 12"/>
    <property type="match status" value="1"/>
</dbReference>
<dbReference type="Gene3D" id="1.10.196.10">
    <property type="match status" value="1"/>
</dbReference>
<dbReference type="Gene3D" id="2.30.42.10">
    <property type="match status" value="1"/>
</dbReference>
<dbReference type="Gene3D" id="3.10.20.90">
    <property type="entry name" value="Phosphatidylinositol 3-kinase Catalytic Subunit, Chain A, domain 1"/>
    <property type="match status" value="2"/>
</dbReference>
<dbReference type="Gene3D" id="2.30.29.30">
    <property type="entry name" value="Pleckstrin-homology domain (PH domain)/Phosphotyrosine-binding domain (PTB)"/>
    <property type="match status" value="1"/>
</dbReference>
<dbReference type="Gene3D" id="1.10.167.10">
    <property type="entry name" value="Regulator of G-protein Signalling 4, domain 2"/>
    <property type="match status" value="1"/>
</dbReference>
<dbReference type="InterPro" id="IPR003109">
    <property type="entry name" value="GoLoco_motif"/>
</dbReference>
<dbReference type="InterPro" id="IPR001478">
    <property type="entry name" value="PDZ"/>
</dbReference>
<dbReference type="InterPro" id="IPR036034">
    <property type="entry name" value="PDZ_sf"/>
</dbReference>
<dbReference type="InterPro" id="IPR011993">
    <property type="entry name" value="PH-like_dom_sf"/>
</dbReference>
<dbReference type="InterPro" id="IPR006020">
    <property type="entry name" value="PTB/PI_dom"/>
</dbReference>
<dbReference type="InterPro" id="IPR003116">
    <property type="entry name" value="RBD_dom"/>
</dbReference>
<dbReference type="InterPro" id="IPR016137">
    <property type="entry name" value="RGS"/>
</dbReference>
<dbReference type="InterPro" id="IPR046995">
    <property type="entry name" value="RGS10/12/14-like"/>
</dbReference>
<dbReference type="InterPro" id="IPR037880">
    <property type="entry name" value="RGS12_RGS"/>
</dbReference>
<dbReference type="InterPro" id="IPR036305">
    <property type="entry name" value="RGS_sf"/>
</dbReference>
<dbReference type="InterPro" id="IPR024066">
    <property type="entry name" value="RGS_subdom1/3"/>
</dbReference>
<dbReference type="InterPro" id="IPR044926">
    <property type="entry name" value="RGS_subdomain_2"/>
</dbReference>
<dbReference type="InterPro" id="IPR029071">
    <property type="entry name" value="Ubiquitin-like_domsf"/>
</dbReference>
<dbReference type="PANTHER" id="PTHR45945:SF1">
    <property type="entry name" value="REGULATOR OF G-PROTEIN SIGNALING 12"/>
    <property type="match status" value="1"/>
</dbReference>
<dbReference type="PANTHER" id="PTHR45945">
    <property type="entry name" value="REGULATOR OF G-PROTEIN SIGNALING LOCO"/>
    <property type="match status" value="1"/>
</dbReference>
<dbReference type="Pfam" id="PF02188">
    <property type="entry name" value="GoLoco"/>
    <property type="match status" value="1"/>
</dbReference>
<dbReference type="Pfam" id="PF00595">
    <property type="entry name" value="PDZ"/>
    <property type="match status" value="1"/>
</dbReference>
<dbReference type="Pfam" id="PF02196">
    <property type="entry name" value="RBD"/>
    <property type="match status" value="1"/>
</dbReference>
<dbReference type="Pfam" id="PF00615">
    <property type="entry name" value="RGS"/>
    <property type="match status" value="1"/>
</dbReference>
<dbReference type="Pfam" id="PF16613">
    <property type="entry name" value="RGS12_us1"/>
    <property type="match status" value="1"/>
</dbReference>
<dbReference type="Pfam" id="PF16611">
    <property type="entry name" value="RGS12_us2"/>
    <property type="match status" value="1"/>
</dbReference>
<dbReference type="Pfam" id="PF16612">
    <property type="entry name" value="RGS12_usC"/>
    <property type="match status" value="1"/>
</dbReference>
<dbReference type="PRINTS" id="PR01301">
    <property type="entry name" value="RGSPROTEIN"/>
</dbReference>
<dbReference type="SMART" id="SM00390">
    <property type="entry name" value="GoLoco"/>
    <property type="match status" value="1"/>
</dbReference>
<dbReference type="SMART" id="SM00228">
    <property type="entry name" value="PDZ"/>
    <property type="match status" value="1"/>
</dbReference>
<dbReference type="SMART" id="SM00462">
    <property type="entry name" value="PTB"/>
    <property type="match status" value="1"/>
</dbReference>
<dbReference type="SMART" id="SM00455">
    <property type="entry name" value="RBD"/>
    <property type="match status" value="2"/>
</dbReference>
<dbReference type="SMART" id="SM00315">
    <property type="entry name" value="RGS"/>
    <property type="match status" value="1"/>
</dbReference>
<dbReference type="SUPFAM" id="SSF50156">
    <property type="entry name" value="PDZ domain-like"/>
    <property type="match status" value="1"/>
</dbReference>
<dbReference type="SUPFAM" id="SSF50729">
    <property type="entry name" value="PH domain-like"/>
    <property type="match status" value="1"/>
</dbReference>
<dbReference type="SUPFAM" id="SSF48097">
    <property type="entry name" value="Regulator of G-protein signaling, RGS"/>
    <property type="match status" value="1"/>
</dbReference>
<dbReference type="SUPFAM" id="SSF54236">
    <property type="entry name" value="Ubiquitin-like"/>
    <property type="match status" value="2"/>
</dbReference>
<dbReference type="PROSITE" id="PS50877">
    <property type="entry name" value="GOLOCO"/>
    <property type="match status" value="1"/>
</dbReference>
<dbReference type="PROSITE" id="PS50106">
    <property type="entry name" value="PDZ"/>
    <property type="match status" value="1"/>
</dbReference>
<dbReference type="PROSITE" id="PS01179">
    <property type="entry name" value="PID"/>
    <property type="match status" value="1"/>
</dbReference>
<dbReference type="PROSITE" id="PS50898">
    <property type="entry name" value="RBD"/>
    <property type="match status" value="2"/>
</dbReference>
<dbReference type="PROSITE" id="PS50132">
    <property type="entry name" value="RGS"/>
    <property type="match status" value="1"/>
</dbReference>
<sequence length="1447" mass="156357">MFRAGEASKRPLPGPSPPRVRSVEVARGRAGYGFTLSGQAPCVLSCVMRGSPADFVGLRAGDQILAVNEINVKKASHEDVVKLIGKCSGVLHMVIAEGVGRFESCSSDEEGGLYEGKGWLKPKLDSKALGINRAERVVEEMQSGGIFNMIFENPSLCASNSEPLKLKQRSLSESAATRFDVGHESINNPNPNMLSKEEISKVIHDDSVFSIGLESHDDFALDASILNVAMIVGYLGSIELPSTSSNLESDSLQAIRGCMRRLRAEQKIHSLVTMKIMHDCVQLSTDKAGVVAEYPAEKLAFSAVCPDDRRFFGLVTMQTNDDGSLAQEEEGALRTSCHVFMVDPDLFNHKIHQGIARRFGFECTADPDTNGCLEFPASSLPVLQFISVLYRDMGELIEGMRARAFLDGDADAHQNNSTSSNSDSGIGNFHQEEKSNRVLVVDLGGSSSRHGPGGSAWDGVGGRGAQPWGAPWTGPFCPDPEGSPPFEAAHQTDRFWDLNKHLGPASPVEVPPASLRSSVPPSKRGTVGAGCGFNQRWLPVHVLREWQCGHTSDQDSYTDSTDGWSSINCGTLPPPMSKIPADRYRVEGSFAQPPLNAPKREWSRKAFGMQSIFGPHRNVRKTKEDKKGSKFGRGTGLTQPSQRTSARRSFGRSKRFSITRSLDDLESATVSDGELTGADLKDCVSNNSLSSNASLPSVQSCRRLRERRVASWAVSFERLLQDPVGVRYFSDFLRKEFSEENILFWQACEYFNHVPAHDKKELSYRAREIFSKFLCSKATTPVNIDSQAQLADDVLRAPHPDMFKEQQLQIFNLMKFDSYTRFLKSPLYQECILAEVEGRALPDSQQVPSSPASKHSLGSDHSSVSTPKKLSGKSKSGRSLNEELGDEDSEKKRKGAFFSWSRTRSTGRSQKKREHGDHADDALHANGGLCRRESQGSVSSAGSLDLSEACRTLAPEKDKATKHCCIHLPDGTSCVVAVKAGFSIKDILSGLCERHGINGAAADLFLVGGDKPLVLHQDSSILESRDLRLEKRTLFRLDLVPINRSVGLKAKPTKPVTEVLRPVVARYGLDLSGLLVRLSGEKEPLDLGAPISSLDGQRVVLEEKDPSRGKASADKQKGVPVKQNTAVNSSSRNHSATGEERTLGKSNSIKIKGENGKNARDPRLSKREESIAKIGKKKYQKINLDEAEEFFELISKAQSNRADDQRGLLRKEDLVLPEFLRLPPGSTELTLPTPAAVAKGFSKRSATGNGRESASQPGEQWEPVQESSDSPSTSPGSASSPPGPPGTTPPGQKSPSGPFCTPQSPVSLAQEGTAQIWKRQSQEVEAGGIQTVEDEHVAELTLMGEGDISSPNSTLLPPPSTPQEVPGPSRPGSGTHGSRDLPVNRIIDVDLVTGSAPGRDGGIAGAQAGPGRSQASGGPPTSDLPGLGPVPGEPAKPKTSAHHATFV</sequence>
<name>RGS12_HUMAN</name>
<comment type="function">
    <text evidence="2">Regulates G protein-coupled receptor signaling cascades. Inhibits signal transduction by increasing the GTPase activity of G protein alpha subunits, thereby driving them into their inactive GDP-bound form.</text>
</comment>
<comment type="function">
    <molecule>Isoform 5</molecule>
    <text evidence="11">Behaves as a cell cycle-dependent transcriptional repressor, promoting inhibition of S-phase DNA synthesis.</text>
</comment>
<comment type="subunit">
    <text evidence="2 12">Interacts with GNAI1 (PubMed:18434541). Interacts with GNAI2 and GNAI3; the interactions are GDP-dependent (By similarity).</text>
</comment>
<comment type="interaction">
    <interactant intactId="EBI-7358493">
        <id>O14924</id>
    </interactant>
    <interactant intactId="EBI-11339910">
        <id>Q8IYS1</id>
        <label>PM20D2</label>
    </interactant>
    <organismsDiffer>false</organismsDiffer>
    <experiments>3</experiments>
</comment>
<comment type="subcellular location">
    <subcellularLocation>
        <location evidence="10">Nucleus</location>
    </subcellularLocation>
    <subcellularLocation>
        <location evidence="2">Cytoplasm</location>
    </subcellularLocation>
    <subcellularLocation>
        <location evidence="2">Cell projection</location>
        <location evidence="2">Dendrite</location>
    </subcellularLocation>
    <subcellularLocation>
        <location evidence="2">Synapse</location>
    </subcellularLocation>
</comment>
<comment type="subcellular location">
    <molecule>Isoform 5</molecule>
    <subcellularLocation>
        <location evidence="11">Nucleus matrix</location>
    </subcellularLocation>
    <text evidence="11">Also localized to discrete nuclear foci that are distinct from sites of RNA processing, PML nuclear bodies, and PcG domains.</text>
</comment>
<comment type="alternative products">
    <event type="alternative splicing"/>
    <isoform>
        <id>O14924-1</id>
        <name>1</name>
        <name>RGS12TS-L</name>
        <name>TS</name>
        <name>trans-spliced</name>
        <sequence type="displayed"/>
    </isoform>
    <isoform>
        <id>O14924-2</id>
        <name>2</name>
        <name>P</name>
        <name>peripheral</name>
        <sequence type="described" ref="VSP_005682 VSP_005683"/>
    </isoform>
    <isoform>
        <id>O14924-3</id>
        <name>3</name>
        <name>B</name>
        <name>brain</name>
        <sequence type="described" ref="VSP_005684 VSP_005685"/>
    </isoform>
    <isoform>
        <id>O14924-4</id>
        <name>4</name>
        <sequence type="described" ref="VSP_005686 VSP_005687"/>
    </isoform>
    <isoform>
        <id>O14924-5</id>
        <name>5</name>
        <name>RGS12TS-S</name>
        <sequence type="described" ref="VSP_047743 VSP_047744"/>
    </isoform>
    <isoform>
        <id>O14924-6</id>
        <name>6</name>
        <sequence type="described" ref="VSP_047741 VSP_047742 VSP_047743 VSP_047744"/>
    </isoform>
    <isoform>
        <id>O14924-7</id>
        <name>7</name>
        <sequence type="described" ref="VSP_005682 VSP_005683 VSP_047743 VSP_047744"/>
    </isoform>
</comment>
<comment type="tissue specificity">
    <text>Isoform 3 is brain specific.</text>
</comment>
<comment type="domain">
    <text evidence="1">The GoLoco domain is necessary for interaction with GNAI1, GNAI2 and GNAI3.</text>
</comment>
<organism>
    <name type="scientific">Homo sapiens</name>
    <name type="common">Human</name>
    <dbReference type="NCBI Taxonomy" id="9606"/>
    <lineage>
        <taxon>Eukaryota</taxon>
        <taxon>Metazoa</taxon>
        <taxon>Chordata</taxon>
        <taxon>Craniata</taxon>
        <taxon>Vertebrata</taxon>
        <taxon>Euteleostomi</taxon>
        <taxon>Mammalia</taxon>
        <taxon>Eutheria</taxon>
        <taxon>Euarchontoglires</taxon>
        <taxon>Primates</taxon>
        <taxon>Haplorrhini</taxon>
        <taxon>Catarrhini</taxon>
        <taxon>Hominidae</taxon>
        <taxon>Homo</taxon>
    </lineage>
</organism>
<reference key="1">
    <citation type="journal article" date="2000" name="J. Biol. Chem.">
        <title>Novel alternative splicing and nuclear localization of human RGS12 gene products.</title>
        <authorList>
            <person name="Chatterjee T.K."/>
            <person name="Fisher R.A."/>
        </authorList>
    </citation>
    <scope>NUCLEOTIDE SEQUENCE [MRNA] (ISOFORMS 1; 2 AND 3)</scope>
    <scope>SUBCELLULAR LOCATION</scope>
    <scope>ALTERNATIVE SPLICING</scope>
    <source>
        <tissue>Lung</tissue>
    </source>
</reference>
<reference key="2">
    <citation type="journal article" date="1998" name="J. Biol. Chem.">
        <title>GTPase activating specificity of RGS12 and binding specificity of an alternatively spliced PDZ (PSD-95/Dlg/ZO-1) domain.</title>
        <authorList>
            <person name="Snow B.E."/>
            <person name="Hall R.A."/>
            <person name="Krumins A.M."/>
            <person name="Brothers G.M."/>
            <person name="Bouchard D."/>
            <person name="Brothers C.A."/>
            <person name="Chung S."/>
            <person name="Mangion J."/>
            <person name="Gilman A.G."/>
            <person name="Lefkowitz R.J."/>
            <person name="Siderovski D.P."/>
        </authorList>
    </citation>
    <scope>NUCLEOTIDE SEQUENCE [MRNA] (ISOFORM 4)</scope>
    <source>
        <tissue>Brain</tissue>
    </source>
</reference>
<reference key="3">
    <citation type="submission" date="2001-12" db="EMBL/GenBank/DDBJ databases">
        <title>Novel amino terminal variant of RGS12TS-S.</title>
        <authorList>
            <person name="Chatterjee T.K."/>
            <person name="Fisher R.A."/>
        </authorList>
    </citation>
    <scope>NUCLEOTIDE SEQUENCE [MRNA] (ISOFORM 6)</scope>
</reference>
<reference key="4">
    <citation type="journal article" date="2004" name="Nat. Genet.">
        <title>Complete sequencing and characterization of 21,243 full-length human cDNAs.</title>
        <authorList>
            <person name="Ota T."/>
            <person name="Suzuki Y."/>
            <person name="Nishikawa T."/>
            <person name="Otsuki T."/>
            <person name="Sugiyama T."/>
            <person name="Irie R."/>
            <person name="Wakamatsu A."/>
            <person name="Hayashi K."/>
            <person name="Sato H."/>
            <person name="Nagai K."/>
            <person name="Kimura K."/>
            <person name="Makita H."/>
            <person name="Sekine M."/>
            <person name="Obayashi M."/>
            <person name="Nishi T."/>
            <person name="Shibahara T."/>
            <person name="Tanaka T."/>
            <person name="Ishii S."/>
            <person name="Yamamoto J."/>
            <person name="Saito K."/>
            <person name="Kawai Y."/>
            <person name="Isono Y."/>
            <person name="Nakamura Y."/>
            <person name="Nagahari K."/>
            <person name="Murakami K."/>
            <person name="Yasuda T."/>
            <person name="Iwayanagi T."/>
            <person name="Wagatsuma M."/>
            <person name="Shiratori A."/>
            <person name="Sudo H."/>
            <person name="Hosoiri T."/>
            <person name="Kaku Y."/>
            <person name="Kodaira H."/>
            <person name="Kondo H."/>
            <person name="Sugawara M."/>
            <person name="Takahashi M."/>
            <person name="Kanda K."/>
            <person name="Yokoi T."/>
            <person name="Furuya T."/>
            <person name="Kikkawa E."/>
            <person name="Omura Y."/>
            <person name="Abe K."/>
            <person name="Kamihara K."/>
            <person name="Katsuta N."/>
            <person name="Sato K."/>
            <person name="Tanikawa M."/>
            <person name="Yamazaki M."/>
            <person name="Ninomiya K."/>
            <person name="Ishibashi T."/>
            <person name="Yamashita H."/>
            <person name="Murakawa K."/>
            <person name="Fujimori K."/>
            <person name="Tanai H."/>
            <person name="Kimata M."/>
            <person name="Watanabe M."/>
            <person name="Hiraoka S."/>
            <person name="Chiba Y."/>
            <person name="Ishida S."/>
            <person name="Ono Y."/>
            <person name="Takiguchi S."/>
            <person name="Watanabe S."/>
            <person name="Yosida M."/>
            <person name="Hotuta T."/>
            <person name="Kusano J."/>
            <person name="Kanehori K."/>
            <person name="Takahashi-Fujii A."/>
            <person name="Hara H."/>
            <person name="Tanase T.-O."/>
            <person name="Nomura Y."/>
            <person name="Togiya S."/>
            <person name="Komai F."/>
            <person name="Hara R."/>
            <person name="Takeuchi K."/>
            <person name="Arita M."/>
            <person name="Imose N."/>
            <person name="Musashino K."/>
            <person name="Yuuki H."/>
            <person name="Oshima A."/>
            <person name="Sasaki N."/>
            <person name="Aotsuka S."/>
            <person name="Yoshikawa Y."/>
            <person name="Matsunawa H."/>
            <person name="Ichihara T."/>
            <person name="Shiohata N."/>
            <person name="Sano S."/>
            <person name="Moriya S."/>
            <person name="Momiyama H."/>
            <person name="Satoh N."/>
            <person name="Takami S."/>
            <person name="Terashima Y."/>
            <person name="Suzuki O."/>
            <person name="Nakagawa S."/>
            <person name="Senoh A."/>
            <person name="Mizoguchi H."/>
            <person name="Goto Y."/>
            <person name="Shimizu F."/>
            <person name="Wakebe H."/>
            <person name="Hishigaki H."/>
            <person name="Watanabe T."/>
            <person name="Sugiyama A."/>
            <person name="Takemoto M."/>
            <person name="Kawakami B."/>
            <person name="Yamazaki M."/>
            <person name="Watanabe K."/>
            <person name="Kumagai A."/>
            <person name="Itakura S."/>
            <person name="Fukuzumi Y."/>
            <person name="Fujimori Y."/>
            <person name="Komiyama M."/>
            <person name="Tashiro H."/>
            <person name="Tanigami A."/>
            <person name="Fujiwara T."/>
            <person name="Ono T."/>
            <person name="Yamada K."/>
            <person name="Fujii Y."/>
            <person name="Ozaki K."/>
            <person name="Hirao M."/>
            <person name="Ohmori Y."/>
            <person name="Kawabata A."/>
            <person name="Hikiji T."/>
            <person name="Kobatake N."/>
            <person name="Inagaki H."/>
            <person name="Ikema Y."/>
            <person name="Okamoto S."/>
            <person name="Okitani R."/>
            <person name="Kawakami T."/>
            <person name="Noguchi S."/>
            <person name="Itoh T."/>
            <person name="Shigeta K."/>
            <person name="Senba T."/>
            <person name="Matsumura K."/>
            <person name="Nakajima Y."/>
            <person name="Mizuno T."/>
            <person name="Morinaga M."/>
            <person name="Sasaki M."/>
            <person name="Togashi T."/>
            <person name="Oyama M."/>
            <person name="Hata H."/>
            <person name="Watanabe M."/>
            <person name="Komatsu T."/>
            <person name="Mizushima-Sugano J."/>
            <person name="Satoh T."/>
            <person name="Shirai Y."/>
            <person name="Takahashi Y."/>
            <person name="Nakagawa K."/>
            <person name="Okumura K."/>
            <person name="Nagase T."/>
            <person name="Nomura N."/>
            <person name="Kikuchi H."/>
            <person name="Masuho Y."/>
            <person name="Yamashita R."/>
            <person name="Nakai K."/>
            <person name="Yada T."/>
            <person name="Nakamura Y."/>
            <person name="Ohara O."/>
            <person name="Isogai T."/>
            <person name="Sugano S."/>
        </authorList>
    </citation>
    <scope>NUCLEOTIDE SEQUENCE [LARGE SCALE MRNA] (ISOFORM 7)</scope>
    <source>
        <tissue>Synovium</tissue>
    </source>
</reference>
<reference key="5">
    <citation type="journal article" date="2005" name="Nature">
        <title>Generation and annotation of the DNA sequences of human chromosomes 2 and 4.</title>
        <authorList>
            <person name="Hillier L.W."/>
            <person name="Graves T.A."/>
            <person name="Fulton R.S."/>
            <person name="Fulton L.A."/>
            <person name="Pepin K.H."/>
            <person name="Minx P."/>
            <person name="Wagner-McPherson C."/>
            <person name="Layman D."/>
            <person name="Wylie K."/>
            <person name="Sekhon M."/>
            <person name="Becker M.C."/>
            <person name="Fewell G.A."/>
            <person name="Delehaunty K.D."/>
            <person name="Miner T.L."/>
            <person name="Nash W.E."/>
            <person name="Kremitzki C."/>
            <person name="Oddy L."/>
            <person name="Du H."/>
            <person name="Sun H."/>
            <person name="Bradshaw-Cordum H."/>
            <person name="Ali J."/>
            <person name="Carter J."/>
            <person name="Cordes M."/>
            <person name="Harris A."/>
            <person name="Isak A."/>
            <person name="van Brunt A."/>
            <person name="Nguyen C."/>
            <person name="Du F."/>
            <person name="Courtney L."/>
            <person name="Kalicki J."/>
            <person name="Ozersky P."/>
            <person name="Abbott S."/>
            <person name="Armstrong J."/>
            <person name="Belter E.A."/>
            <person name="Caruso L."/>
            <person name="Cedroni M."/>
            <person name="Cotton M."/>
            <person name="Davidson T."/>
            <person name="Desai A."/>
            <person name="Elliott G."/>
            <person name="Erb T."/>
            <person name="Fronick C."/>
            <person name="Gaige T."/>
            <person name="Haakenson W."/>
            <person name="Haglund K."/>
            <person name="Holmes A."/>
            <person name="Harkins R."/>
            <person name="Kim K."/>
            <person name="Kruchowski S.S."/>
            <person name="Strong C.M."/>
            <person name="Grewal N."/>
            <person name="Goyea E."/>
            <person name="Hou S."/>
            <person name="Levy A."/>
            <person name="Martinka S."/>
            <person name="Mead K."/>
            <person name="McLellan M.D."/>
            <person name="Meyer R."/>
            <person name="Randall-Maher J."/>
            <person name="Tomlinson C."/>
            <person name="Dauphin-Kohlberg S."/>
            <person name="Kozlowicz-Reilly A."/>
            <person name="Shah N."/>
            <person name="Swearengen-Shahid S."/>
            <person name="Snider J."/>
            <person name="Strong J.T."/>
            <person name="Thompson J."/>
            <person name="Yoakum M."/>
            <person name="Leonard S."/>
            <person name="Pearman C."/>
            <person name="Trani L."/>
            <person name="Radionenko M."/>
            <person name="Waligorski J.E."/>
            <person name="Wang C."/>
            <person name="Rock S.M."/>
            <person name="Tin-Wollam A.-M."/>
            <person name="Maupin R."/>
            <person name="Latreille P."/>
            <person name="Wendl M.C."/>
            <person name="Yang S.-P."/>
            <person name="Pohl C."/>
            <person name="Wallis J.W."/>
            <person name="Spieth J."/>
            <person name="Bieri T.A."/>
            <person name="Berkowicz N."/>
            <person name="Nelson J.O."/>
            <person name="Osborne J."/>
            <person name="Ding L."/>
            <person name="Meyer R."/>
            <person name="Sabo A."/>
            <person name="Shotland Y."/>
            <person name="Sinha P."/>
            <person name="Wohldmann P.E."/>
            <person name="Cook L.L."/>
            <person name="Hickenbotham M.T."/>
            <person name="Eldred J."/>
            <person name="Williams D."/>
            <person name="Jones T.A."/>
            <person name="She X."/>
            <person name="Ciccarelli F.D."/>
            <person name="Izaurralde E."/>
            <person name="Taylor J."/>
            <person name="Schmutz J."/>
            <person name="Myers R.M."/>
            <person name="Cox D.R."/>
            <person name="Huang X."/>
            <person name="McPherson J.D."/>
            <person name="Mardis E.R."/>
            <person name="Clifton S.W."/>
            <person name="Warren W.C."/>
            <person name="Chinwalla A.T."/>
            <person name="Eddy S.R."/>
            <person name="Marra M.A."/>
            <person name="Ovcharenko I."/>
            <person name="Furey T.S."/>
            <person name="Miller W."/>
            <person name="Eichler E.E."/>
            <person name="Bork P."/>
            <person name="Suyama M."/>
            <person name="Torrents D."/>
            <person name="Waterston R.H."/>
            <person name="Wilson R.K."/>
        </authorList>
    </citation>
    <scope>NUCLEOTIDE SEQUENCE [LARGE SCALE GENOMIC DNA]</scope>
</reference>
<reference key="6">
    <citation type="submission" date="2005-09" db="EMBL/GenBank/DDBJ databases">
        <authorList>
            <person name="Mural R.J."/>
            <person name="Istrail S."/>
            <person name="Sutton G.G."/>
            <person name="Florea L."/>
            <person name="Halpern A.L."/>
            <person name="Mobarry C.M."/>
            <person name="Lippert R."/>
            <person name="Walenz B."/>
            <person name="Shatkay H."/>
            <person name="Dew I."/>
            <person name="Miller J.R."/>
            <person name="Flanigan M.J."/>
            <person name="Edwards N.J."/>
            <person name="Bolanos R."/>
            <person name="Fasulo D."/>
            <person name="Halldorsson B.V."/>
            <person name="Hannenhalli S."/>
            <person name="Turner R."/>
            <person name="Yooseph S."/>
            <person name="Lu F."/>
            <person name="Nusskern D.R."/>
            <person name="Shue B.C."/>
            <person name="Zheng X.H."/>
            <person name="Zhong F."/>
            <person name="Delcher A.L."/>
            <person name="Huson D.H."/>
            <person name="Kravitz S.A."/>
            <person name="Mouchard L."/>
            <person name="Reinert K."/>
            <person name="Remington K.A."/>
            <person name="Clark A.G."/>
            <person name="Waterman M.S."/>
            <person name="Eichler E.E."/>
            <person name="Adams M.D."/>
            <person name="Hunkapiller M.W."/>
            <person name="Myers E.W."/>
            <person name="Venter J.C."/>
        </authorList>
    </citation>
    <scope>NUCLEOTIDE SEQUENCE [LARGE SCALE GENOMIC DNA]</scope>
</reference>
<reference key="7">
    <citation type="journal article" date="2004" name="Genome Res.">
        <title>The status, quality, and expansion of the NIH full-length cDNA project: the Mammalian Gene Collection (MGC).</title>
        <authorList>
            <consortium name="The MGC Project Team"/>
        </authorList>
    </citation>
    <scope>NUCLEOTIDE SEQUENCE [LARGE SCALE MRNA] (ISOFORM 6)</scope>
</reference>
<reference key="8">
    <citation type="journal article" date="2002" name="Mol. Cell. Biol.">
        <title>RGS12TS-S localizes at nuclear matrix-associated subnuclear structures and represses transcription: structural requirements for subnuclear targeting and transcriptional repression.</title>
        <authorList>
            <person name="Chatterjee T.K."/>
            <person name="Fisher R.A."/>
        </authorList>
    </citation>
    <scope>ALTERNATIVE SPLICING (ISOFORM 5)</scope>
    <scope>FUNCTION (ISOFORM 5)</scope>
    <scope>SUBCELLULAR LOCATION (ISOFORM 5)</scope>
</reference>
<reference key="9">
    <citation type="journal article" date="2007" name="Science">
        <title>ATM and ATR substrate analysis reveals extensive protein networks responsive to DNA damage.</title>
        <authorList>
            <person name="Matsuoka S."/>
            <person name="Ballif B.A."/>
            <person name="Smogorzewska A."/>
            <person name="McDonald E.R. III"/>
            <person name="Hurov K.E."/>
            <person name="Luo J."/>
            <person name="Bakalarski C.E."/>
            <person name="Zhao Z."/>
            <person name="Solimini N."/>
            <person name="Lerenthal Y."/>
            <person name="Shiloh Y."/>
            <person name="Gygi S.P."/>
            <person name="Elledge S.J."/>
        </authorList>
    </citation>
    <scope>IDENTIFICATION BY MASS SPECTROMETRY [LARGE SCALE ANALYSIS]</scope>
    <source>
        <tissue>Embryonic kidney</tissue>
    </source>
</reference>
<reference key="10">
    <citation type="journal article" date="2008" name="Proc. Natl. Acad. Sci. U.S.A.">
        <title>Structural diversity in the RGS domain and its interaction with heterotrimeric G protein alpha-subunits.</title>
        <authorList>
            <person name="Soundararajan M."/>
            <person name="Willard F.S."/>
            <person name="Kimple A.J."/>
            <person name="Turnbull A.P."/>
            <person name="Ball L.J."/>
            <person name="Schoch G.A."/>
            <person name="Gileadi C."/>
            <person name="Fedorov O.Y."/>
            <person name="Dowler E.F."/>
            <person name="Higman V.A."/>
            <person name="Hutsell S.Q."/>
            <person name="Sundstroem M."/>
            <person name="Doyle D.A."/>
            <person name="Siderovski D.P."/>
        </authorList>
    </citation>
    <scope>INTERACTION WITH GNAI1</scope>
</reference>
<reference key="11">
    <citation type="journal article" date="2014" name="Mol. Cell. Proteomics">
        <title>Immunoaffinity enrichment and mass spectrometry analysis of protein methylation.</title>
        <authorList>
            <person name="Guo A."/>
            <person name="Gu H."/>
            <person name="Zhou J."/>
            <person name="Mulhern D."/>
            <person name="Wang Y."/>
            <person name="Lee K.A."/>
            <person name="Yang V."/>
            <person name="Aguiar M."/>
            <person name="Kornhauser J."/>
            <person name="Jia X."/>
            <person name="Ren J."/>
            <person name="Beausoleil S.A."/>
            <person name="Silva J.C."/>
            <person name="Vemulapalli V."/>
            <person name="Bedford M.T."/>
            <person name="Comb M.J."/>
        </authorList>
    </citation>
    <scope>METHYLATION [LARGE SCALE ANALYSIS] AT ARG-524</scope>
    <scope>IDENTIFICATION BY MASS SPECTROMETRY [LARGE SCALE ANALYSIS]</scope>
    <source>
        <tissue>Colon carcinoma</tissue>
    </source>
</reference>
<reference key="12">
    <citation type="journal article" date="2017" name="Nat. Struct. Mol. Biol.">
        <title>Site-specific mapping of the human SUMO proteome reveals co-modification with phosphorylation.</title>
        <authorList>
            <person name="Hendriks I.A."/>
            <person name="Lyon D."/>
            <person name="Young C."/>
            <person name="Jensen L.J."/>
            <person name="Vertegaal A.C."/>
            <person name="Nielsen M.L."/>
        </authorList>
    </citation>
    <scope>SUMOYLATION [LARGE SCALE ANALYSIS] AT LYS-196</scope>
    <scope>IDENTIFICATION BY MASS SPECTROMETRY [LARGE SCALE ANALYSIS]</scope>
</reference>
<reference key="13">
    <citation type="submission" date="2008-03" db="PDB data bank">
        <title>Solution structure of the RGS domain from human regulator of G-protein signaling 12 (RGS12).</title>
        <authorList>
            <consortium name="RIKEN structural genomics initiative (RSGI)"/>
        </authorList>
    </citation>
    <scope>STRUCTURE BY NMR OF 705-852</scope>
</reference>
<proteinExistence type="evidence at protein level"/>
<feature type="chain" id="PRO_0000204213" description="Regulator of G-protein signaling 12">
    <location>
        <begin position="1"/>
        <end position="1447"/>
    </location>
</feature>
<feature type="domain" description="PDZ" evidence="5">
    <location>
        <begin position="22"/>
        <end position="98"/>
    </location>
</feature>
<feature type="domain" description="PID" evidence="6">
    <location>
        <begin position="228"/>
        <end position="340"/>
    </location>
</feature>
<feature type="domain" description="RGS" evidence="7">
    <location>
        <begin position="715"/>
        <end position="832"/>
    </location>
</feature>
<feature type="domain" description="RBD 1" evidence="8">
    <location>
        <begin position="962"/>
        <end position="1032"/>
    </location>
</feature>
<feature type="domain" description="RBD 2" evidence="8">
    <location>
        <begin position="1034"/>
        <end position="1104"/>
    </location>
</feature>
<feature type="domain" description="GoLoco" evidence="4">
    <location>
        <begin position="1187"/>
        <end position="1209"/>
    </location>
</feature>
<feature type="region of interest" description="Disordered" evidence="9">
    <location>
        <begin position="1"/>
        <end position="21"/>
    </location>
</feature>
<feature type="region of interest" description="Disordered" evidence="9">
    <location>
        <begin position="410"/>
        <end position="429"/>
    </location>
</feature>
<feature type="region of interest" description="Disordered" evidence="9">
    <location>
        <begin position="443"/>
        <end position="482"/>
    </location>
</feature>
<feature type="region of interest" description="Disordered" evidence="9">
    <location>
        <begin position="618"/>
        <end position="652"/>
    </location>
</feature>
<feature type="region of interest" description="Disordered" evidence="9">
    <location>
        <begin position="843"/>
        <end position="941"/>
    </location>
</feature>
<feature type="region of interest" description="Disordered" evidence="9">
    <location>
        <begin position="1103"/>
        <end position="1169"/>
    </location>
</feature>
<feature type="region of interest" description="Disordered" evidence="9">
    <location>
        <begin position="1240"/>
        <end position="1447"/>
    </location>
</feature>
<feature type="compositionally biased region" description="Polar residues" evidence="9">
    <location>
        <begin position="413"/>
        <end position="425"/>
    </location>
</feature>
<feature type="compositionally biased region" description="Gly residues" evidence="9">
    <location>
        <begin position="451"/>
        <end position="464"/>
    </location>
</feature>
<feature type="compositionally biased region" description="Polar residues" evidence="9">
    <location>
        <begin position="843"/>
        <end position="853"/>
    </location>
</feature>
<feature type="compositionally biased region" description="Basic and acidic residues" evidence="9">
    <location>
        <begin position="914"/>
        <end position="923"/>
    </location>
</feature>
<feature type="compositionally biased region" description="Basic and acidic residues" evidence="9">
    <location>
        <begin position="1103"/>
        <end position="1117"/>
    </location>
</feature>
<feature type="compositionally biased region" description="Polar residues" evidence="9">
    <location>
        <begin position="1122"/>
        <end position="1136"/>
    </location>
</feature>
<feature type="compositionally biased region" description="Basic and acidic residues" evidence="9">
    <location>
        <begin position="1151"/>
        <end position="1169"/>
    </location>
</feature>
<feature type="compositionally biased region" description="Polar residues" evidence="9">
    <location>
        <begin position="1244"/>
        <end position="1258"/>
    </location>
</feature>
<feature type="compositionally biased region" description="Low complexity" evidence="9">
    <location>
        <begin position="1267"/>
        <end position="1280"/>
    </location>
</feature>
<feature type="compositionally biased region" description="Low complexity" evidence="9">
    <location>
        <begin position="1289"/>
        <end position="1298"/>
    </location>
</feature>
<feature type="compositionally biased region" description="Polar residues" evidence="9">
    <location>
        <begin position="1301"/>
        <end position="1313"/>
    </location>
</feature>
<feature type="modified residue" description="Phosphoserine" evidence="3">
    <location>
        <position position="172"/>
    </location>
</feature>
<feature type="modified residue" description="Phosphoserine" evidence="3">
    <location>
        <position position="195"/>
    </location>
</feature>
<feature type="modified residue" description="Omega-N-methylarginine" evidence="19">
    <location>
        <position position="524"/>
    </location>
</feature>
<feature type="modified residue" description="Omega-N-methylarginine" evidence="3">
    <location>
        <position position="633"/>
    </location>
</feature>
<feature type="modified residue" description="Phosphoserine" evidence="3">
    <location>
        <position position="661"/>
    </location>
</feature>
<feature type="modified residue" description="Phosphoserine" evidence="3">
    <location>
        <position position="671"/>
    </location>
</feature>
<feature type="modified residue" description="Phosphoserine" evidence="3">
    <location>
        <position position="850"/>
    </location>
</feature>
<feature type="modified residue" description="Phosphoserine" evidence="3">
    <location>
        <position position="879"/>
    </location>
</feature>
<feature type="modified residue" description="Phosphoserine" evidence="3">
    <location>
        <position position="943"/>
    </location>
</feature>
<feature type="cross-link" description="Glycyl lysine isopeptide (Lys-Gly) (interchain with G-Cter in SUMO2)" evidence="20">
    <location>
        <position position="196"/>
    </location>
</feature>
<feature type="splice variant" id="VSP_005682" description="In isoform 2 and isoform 7." evidence="13 14">
    <location>
        <begin position="1"/>
        <end position="658"/>
    </location>
</feature>
<feature type="splice variant" id="VSP_005684" description="In isoform 3." evidence="13">
    <location>
        <begin position="1"/>
        <end position="647"/>
    </location>
</feature>
<feature type="splice variant" id="VSP_047741" description="In isoform 6." evidence="15 17">
    <original>MFRAGEASKRPLPGPSPPRVRSVEV</original>
    <variation>MKKHDFAENLPSSLLIIILVIFTLS</variation>
    <location>
        <begin position="1"/>
        <end position="25"/>
    </location>
</feature>
<feature type="splice variant" id="VSP_047742" description="In isoform 6." evidence="15 17">
    <location>
        <begin position="26"/>
        <end position="627"/>
    </location>
</feature>
<feature type="splice variant" id="VSP_005685" description="In isoform 3." evidence="13">
    <original>RSFGRSKRFSITRSLDDLE</original>
    <variation>MNLGKELSNETHVSNDQQ</variation>
    <location>
        <begin position="648"/>
        <end position="666"/>
    </location>
</feature>
<feature type="splice variant" id="VSP_005683" description="In isoform 2 and isoform 7." evidence="13 14">
    <original>TRSLDDLE</original>
    <variation>MSLSLFFQ</variation>
    <location>
        <begin position="659"/>
        <end position="666"/>
    </location>
</feature>
<feature type="splice variant" id="VSP_047743" description="In isoform 5, isoform 6 and isoform 7." evidence="14 15 17">
    <original>GEERTLGKSNSIKIKGENGK</original>
    <variation>SFLSLFPKLRATEQMTNVGC</variation>
    <location>
        <begin position="1138"/>
        <end position="1157"/>
    </location>
</feature>
<feature type="splice variant" id="VSP_047744" description="In isoform 5, isoform 6 and isoform 7." evidence="14 15 17">
    <location>
        <begin position="1158"/>
        <end position="1447"/>
    </location>
</feature>
<feature type="splice variant" id="VSP_005686" description="In isoform 4." evidence="16">
    <original>SGTH</original>
    <variation>TSRF</variation>
    <location>
        <begin position="1373"/>
        <end position="1376"/>
    </location>
</feature>
<feature type="splice variant" id="VSP_005687" description="In isoform 4." evidence="16">
    <location>
        <begin position="1377"/>
        <end position="1447"/>
    </location>
</feature>
<feature type="sequence variant" id="VAR_034451" description="In dbSNP:rs7679941.">
    <original>I</original>
    <variation>V</variation>
    <location>
        <position position="225"/>
    </location>
</feature>
<feature type="sequence variant" id="VAR_034452" description="In dbSNP:rs16844152.">
    <original>M</original>
    <variation>L</variation>
    <location>
        <position position="277"/>
    </location>
</feature>
<feature type="sequence variant" id="VAR_020208" description="In dbSNP:rs2269497.">
    <original>N</original>
    <variation>S</variation>
    <location>
        <position position="1124"/>
    </location>
</feature>
<feature type="sequence conflict" description="In Ref. 7; AAI18595." evidence="18" ref="7">
    <original>A</original>
    <variation>V</variation>
    <location>
        <position position="941"/>
    </location>
</feature>
<feature type="strand" evidence="22">
    <location>
        <begin position="20"/>
        <end position="25"/>
    </location>
</feature>
<feature type="strand" evidence="22">
    <location>
        <begin position="39"/>
        <end position="41"/>
    </location>
</feature>
<feature type="turn" evidence="22">
    <location>
        <begin position="52"/>
        <end position="56"/>
    </location>
</feature>
<feature type="strand" evidence="22">
    <location>
        <begin position="63"/>
        <end position="67"/>
    </location>
</feature>
<feature type="helix" evidence="22">
    <location>
        <begin position="77"/>
        <end position="84"/>
    </location>
</feature>
<feature type="strand" evidence="22">
    <location>
        <begin position="91"/>
        <end position="96"/>
    </location>
</feature>
<feature type="helix" evidence="21">
    <location>
        <begin position="711"/>
        <end position="714"/>
    </location>
</feature>
<feature type="helix" evidence="21">
    <location>
        <begin position="716"/>
        <end position="721"/>
    </location>
</feature>
<feature type="helix" evidence="21">
    <location>
        <begin position="723"/>
        <end position="735"/>
    </location>
</feature>
<feature type="helix" evidence="21">
    <location>
        <begin position="739"/>
        <end position="753"/>
    </location>
</feature>
<feature type="helix" evidence="21">
    <location>
        <begin position="759"/>
        <end position="773"/>
    </location>
</feature>
<feature type="strand" evidence="21">
    <location>
        <begin position="774"/>
        <end position="777"/>
    </location>
</feature>
<feature type="helix" evidence="21">
    <location>
        <begin position="786"/>
        <end position="788"/>
    </location>
</feature>
<feature type="helix" evidence="21">
    <location>
        <begin position="790"/>
        <end position="796"/>
    </location>
</feature>
<feature type="helix" evidence="21">
    <location>
        <begin position="802"/>
        <end position="816"/>
    </location>
</feature>
<feature type="helix" evidence="21">
    <location>
        <begin position="818"/>
        <end position="824"/>
    </location>
</feature>
<feature type="helix" evidence="21">
    <location>
        <begin position="826"/>
        <end position="837"/>
    </location>
</feature>
<feature type="turn" evidence="21">
    <location>
        <begin position="844"/>
        <end position="846"/>
    </location>
</feature>
<protein>
    <recommendedName>
        <fullName>Regulator of G-protein signaling 12</fullName>
        <shortName>RGS12</shortName>
    </recommendedName>
</protein>
<gene>
    <name type="primary">RGS12</name>
</gene>
<keyword id="KW-0002">3D-structure</keyword>
<keyword id="KW-0025">Alternative splicing</keyword>
<keyword id="KW-0966">Cell projection</keyword>
<keyword id="KW-0963">Cytoplasm</keyword>
<keyword id="KW-0343">GTPase activation</keyword>
<keyword id="KW-1017">Isopeptide bond</keyword>
<keyword id="KW-0488">Methylation</keyword>
<keyword id="KW-0539">Nucleus</keyword>
<keyword id="KW-0597">Phosphoprotein</keyword>
<keyword id="KW-1267">Proteomics identification</keyword>
<keyword id="KW-1185">Reference proteome</keyword>
<keyword id="KW-0677">Repeat</keyword>
<keyword id="KW-0678">Repressor</keyword>
<keyword id="KW-0734">Signal transduction inhibitor</keyword>
<keyword id="KW-0770">Synapse</keyword>
<keyword id="KW-0804">Transcription</keyword>
<keyword id="KW-0832">Ubl conjugation</keyword>